<feature type="chain" id="PRO_0000359365" description="5'-methylthioadenosine/S-adenosylhomocysteine nucleosidase">
    <location>
        <begin position="1"/>
        <end position="228"/>
    </location>
</feature>
<feature type="active site" description="Proton acceptor" evidence="1">
    <location>
        <position position="11"/>
    </location>
</feature>
<feature type="active site" description="Proton donor" evidence="1">
    <location>
        <position position="196"/>
    </location>
</feature>
<feature type="binding site" evidence="1">
    <location>
        <position position="77"/>
    </location>
    <ligand>
        <name>substrate</name>
    </ligand>
</feature>
<feature type="binding site" evidence="1">
    <location>
        <position position="151"/>
    </location>
    <ligand>
        <name>substrate</name>
    </ligand>
</feature>
<feature type="binding site" evidence="1">
    <location>
        <begin position="172"/>
        <end position="173"/>
    </location>
    <ligand>
        <name>substrate</name>
    </ligand>
</feature>
<reference key="1">
    <citation type="submission" date="2007-05" db="EMBL/GenBank/DDBJ databases">
        <title>Complete sequence of chromosome of Staphylococcus aureus subsp. aureus JH9.</title>
        <authorList>
            <consortium name="US DOE Joint Genome Institute"/>
            <person name="Copeland A."/>
            <person name="Lucas S."/>
            <person name="Lapidus A."/>
            <person name="Barry K."/>
            <person name="Detter J.C."/>
            <person name="Glavina del Rio T."/>
            <person name="Hammon N."/>
            <person name="Israni S."/>
            <person name="Pitluck S."/>
            <person name="Chain P."/>
            <person name="Malfatti S."/>
            <person name="Shin M."/>
            <person name="Vergez L."/>
            <person name="Schmutz J."/>
            <person name="Larimer F."/>
            <person name="Land M."/>
            <person name="Hauser L."/>
            <person name="Kyrpides N."/>
            <person name="Kim E."/>
            <person name="Tomasz A."/>
            <person name="Richardson P."/>
        </authorList>
    </citation>
    <scope>NUCLEOTIDE SEQUENCE [LARGE SCALE GENOMIC DNA]</scope>
    <source>
        <strain>JH9</strain>
    </source>
</reference>
<gene>
    <name evidence="1" type="primary">mtnN</name>
    <name type="ordered locus">SaurJH9_1656</name>
</gene>
<organism>
    <name type="scientific">Staphylococcus aureus (strain JH9)</name>
    <dbReference type="NCBI Taxonomy" id="359786"/>
    <lineage>
        <taxon>Bacteria</taxon>
        <taxon>Bacillati</taxon>
        <taxon>Bacillota</taxon>
        <taxon>Bacilli</taxon>
        <taxon>Bacillales</taxon>
        <taxon>Staphylococcaceae</taxon>
        <taxon>Staphylococcus</taxon>
    </lineage>
</organism>
<protein>
    <recommendedName>
        <fullName evidence="1">5'-methylthioadenosine/S-adenosylhomocysteine nucleosidase</fullName>
        <shortName evidence="1">MTA/SAH nucleosidase</shortName>
        <shortName evidence="1">MTAN</shortName>
        <ecNumber evidence="1">3.2.2.9</ecNumber>
    </recommendedName>
    <alternativeName>
        <fullName evidence="1">5'-deoxyadenosine nucleosidase</fullName>
        <shortName evidence="1">DOA nucleosidase</shortName>
        <shortName evidence="1">dAdo nucleosidase</shortName>
    </alternativeName>
    <alternativeName>
        <fullName evidence="1">5'-methylthioadenosine nucleosidase</fullName>
        <shortName evidence="1">MTA nucleosidase</shortName>
    </alternativeName>
    <alternativeName>
        <fullName evidence="1">S-adenosylhomocysteine nucleosidase</fullName>
        <shortName evidence="1">AdoHcy nucleosidase</shortName>
        <shortName evidence="1">SAH nucleosidase</shortName>
        <shortName evidence="1">SRH nucleosidase</shortName>
    </alternativeName>
</protein>
<name>MTNN_STAA9</name>
<comment type="function">
    <text evidence="1">Catalyzes the irreversible cleavage of the glycosidic bond in both 5'-methylthioadenosine (MTA) and S-adenosylhomocysteine (SAH/AdoHcy) to adenine and the corresponding thioribose, 5'-methylthioribose and S-ribosylhomocysteine, respectively. Also cleaves 5'-deoxyadenosine, a toxic by-product of radical S-adenosylmethionine (SAM) enzymes, into 5-deoxyribose and adenine.</text>
</comment>
<comment type="catalytic activity">
    <reaction evidence="1">
        <text>S-adenosyl-L-homocysteine + H2O = S-(5-deoxy-D-ribos-5-yl)-L-homocysteine + adenine</text>
        <dbReference type="Rhea" id="RHEA:17805"/>
        <dbReference type="ChEBI" id="CHEBI:15377"/>
        <dbReference type="ChEBI" id="CHEBI:16708"/>
        <dbReference type="ChEBI" id="CHEBI:57856"/>
        <dbReference type="ChEBI" id="CHEBI:58195"/>
        <dbReference type="EC" id="3.2.2.9"/>
    </reaction>
</comment>
<comment type="catalytic activity">
    <reaction evidence="1">
        <text>S-methyl-5'-thioadenosine + H2O = 5-(methylsulfanyl)-D-ribose + adenine</text>
        <dbReference type="Rhea" id="RHEA:13617"/>
        <dbReference type="ChEBI" id="CHEBI:15377"/>
        <dbReference type="ChEBI" id="CHEBI:16708"/>
        <dbReference type="ChEBI" id="CHEBI:17509"/>
        <dbReference type="ChEBI" id="CHEBI:78440"/>
        <dbReference type="EC" id="3.2.2.9"/>
    </reaction>
</comment>
<comment type="catalytic activity">
    <reaction evidence="1">
        <text>5'-deoxyadenosine + H2O = 5-deoxy-D-ribose + adenine</text>
        <dbReference type="Rhea" id="RHEA:29859"/>
        <dbReference type="ChEBI" id="CHEBI:15377"/>
        <dbReference type="ChEBI" id="CHEBI:16708"/>
        <dbReference type="ChEBI" id="CHEBI:17319"/>
        <dbReference type="ChEBI" id="CHEBI:149540"/>
        <dbReference type="EC" id="3.2.2.9"/>
    </reaction>
    <physiologicalReaction direction="left-to-right" evidence="1">
        <dbReference type="Rhea" id="RHEA:29860"/>
    </physiologicalReaction>
</comment>
<comment type="pathway">
    <text evidence="1">Amino-acid biosynthesis; L-methionine biosynthesis via salvage pathway; S-methyl-5-thio-alpha-D-ribose 1-phosphate from S-methyl-5'-thioadenosine (hydrolase route): step 1/2.</text>
</comment>
<comment type="similarity">
    <text evidence="1">Belongs to the PNP/UDP phosphorylase family. MtnN subfamily.</text>
</comment>
<accession>A5ITC6</accession>
<dbReference type="EC" id="3.2.2.9" evidence="1"/>
<dbReference type="EMBL" id="CP000703">
    <property type="protein sequence ID" value="ABQ49449.1"/>
    <property type="molecule type" value="Genomic_DNA"/>
</dbReference>
<dbReference type="RefSeq" id="WP_000579275.1">
    <property type="nucleotide sequence ID" value="NC_009487.1"/>
</dbReference>
<dbReference type="SMR" id="A5ITC6"/>
<dbReference type="KEGG" id="saj:SaurJH9_1656"/>
<dbReference type="HOGENOM" id="CLU_031248_2_2_9"/>
<dbReference type="UniPathway" id="UPA00904">
    <property type="reaction ID" value="UER00871"/>
</dbReference>
<dbReference type="GO" id="GO:0005829">
    <property type="term" value="C:cytosol"/>
    <property type="evidence" value="ECO:0007669"/>
    <property type="project" value="TreeGrafter"/>
</dbReference>
<dbReference type="GO" id="GO:0008782">
    <property type="term" value="F:adenosylhomocysteine nucleosidase activity"/>
    <property type="evidence" value="ECO:0007669"/>
    <property type="project" value="UniProtKB-UniRule"/>
</dbReference>
<dbReference type="GO" id="GO:0008930">
    <property type="term" value="F:methylthioadenosine nucleosidase activity"/>
    <property type="evidence" value="ECO:0007669"/>
    <property type="project" value="UniProtKB-UniRule"/>
</dbReference>
<dbReference type="GO" id="GO:0019509">
    <property type="term" value="P:L-methionine salvage from methylthioadenosine"/>
    <property type="evidence" value="ECO:0007669"/>
    <property type="project" value="UniProtKB-UniRule"/>
</dbReference>
<dbReference type="GO" id="GO:0019284">
    <property type="term" value="P:L-methionine salvage from S-adenosylmethionine"/>
    <property type="evidence" value="ECO:0007669"/>
    <property type="project" value="TreeGrafter"/>
</dbReference>
<dbReference type="GO" id="GO:0009164">
    <property type="term" value="P:nucleoside catabolic process"/>
    <property type="evidence" value="ECO:0007669"/>
    <property type="project" value="InterPro"/>
</dbReference>
<dbReference type="CDD" id="cd09008">
    <property type="entry name" value="MTAN"/>
    <property type="match status" value="1"/>
</dbReference>
<dbReference type="FunFam" id="3.40.50.1580:FF:000001">
    <property type="entry name" value="MTA/SAH nucleosidase family protein"/>
    <property type="match status" value="1"/>
</dbReference>
<dbReference type="Gene3D" id="3.40.50.1580">
    <property type="entry name" value="Nucleoside phosphorylase domain"/>
    <property type="match status" value="1"/>
</dbReference>
<dbReference type="HAMAP" id="MF_01684">
    <property type="entry name" value="Salvage_MtnN"/>
    <property type="match status" value="1"/>
</dbReference>
<dbReference type="InterPro" id="IPR010049">
    <property type="entry name" value="MTA_SAH_Nsdase"/>
</dbReference>
<dbReference type="InterPro" id="IPR000845">
    <property type="entry name" value="Nucleoside_phosphorylase_d"/>
</dbReference>
<dbReference type="InterPro" id="IPR035994">
    <property type="entry name" value="Nucleoside_phosphorylase_sf"/>
</dbReference>
<dbReference type="NCBIfam" id="TIGR01704">
    <property type="entry name" value="MTA_SAH-Nsdase"/>
    <property type="match status" value="1"/>
</dbReference>
<dbReference type="NCBIfam" id="NF004079">
    <property type="entry name" value="PRK05584.1"/>
    <property type="match status" value="1"/>
</dbReference>
<dbReference type="PANTHER" id="PTHR46832">
    <property type="entry name" value="5'-METHYLTHIOADENOSINE/S-ADENOSYLHOMOCYSTEINE NUCLEOSIDASE"/>
    <property type="match status" value="1"/>
</dbReference>
<dbReference type="PANTHER" id="PTHR46832:SF1">
    <property type="entry name" value="5'-METHYLTHIOADENOSINE_S-ADENOSYLHOMOCYSTEINE NUCLEOSIDASE"/>
    <property type="match status" value="1"/>
</dbReference>
<dbReference type="Pfam" id="PF01048">
    <property type="entry name" value="PNP_UDP_1"/>
    <property type="match status" value="1"/>
</dbReference>
<dbReference type="SUPFAM" id="SSF53167">
    <property type="entry name" value="Purine and uridine phosphorylases"/>
    <property type="match status" value="1"/>
</dbReference>
<proteinExistence type="inferred from homology"/>
<evidence type="ECO:0000255" key="1">
    <source>
        <dbReference type="HAMAP-Rule" id="MF_01684"/>
    </source>
</evidence>
<sequence>MIGIIGAMEEEVTILKNKLTQLSEISVAHVKFYTGILKDREVVITQSGIGKVNAAISTTLLINKFKPDVIINTGSAGALDESLNVGDVLISDDVKYHDADATAFGYEYGQIPQMPVAFQSSKPLIEKVSQVVQQQQLTAKVGLIVSGDSFIGSVEQRQKIKKAFPNAMAVEMEATAIAQTCYQFNVPFVVVRAVSDLANGEAEMSFEAFLEKAAVSSSQTVEALVSQL</sequence>
<keyword id="KW-0028">Amino-acid biosynthesis</keyword>
<keyword id="KW-0378">Hydrolase</keyword>
<keyword id="KW-0486">Methionine biosynthesis</keyword>